<name>FSL3_GIBZE</name>
<accession>A0A0E0RXA9</accession>
<reference key="1">
    <citation type="journal article" date="2007" name="Science">
        <title>The Fusarium graminearum genome reveals a link between localized polymorphism and pathogen specialization.</title>
        <authorList>
            <person name="Cuomo C.A."/>
            <person name="Gueldener U."/>
            <person name="Xu J.-R."/>
            <person name="Trail F."/>
            <person name="Turgeon B.G."/>
            <person name="Di Pietro A."/>
            <person name="Walton J.D."/>
            <person name="Ma L.-J."/>
            <person name="Baker S.E."/>
            <person name="Rep M."/>
            <person name="Adam G."/>
            <person name="Antoniw J."/>
            <person name="Baldwin T."/>
            <person name="Calvo S.E."/>
            <person name="Chang Y.-L."/>
            <person name="DeCaprio D."/>
            <person name="Gale L.R."/>
            <person name="Gnerre S."/>
            <person name="Goswami R.S."/>
            <person name="Hammond-Kosack K."/>
            <person name="Harris L.J."/>
            <person name="Hilburn K."/>
            <person name="Kennell J.C."/>
            <person name="Kroken S."/>
            <person name="Magnuson J.K."/>
            <person name="Mannhaupt G."/>
            <person name="Mauceli E.W."/>
            <person name="Mewes H.-W."/>
            <person name="Mitterbauer R."/>
            <person name="Muehlbauer G."/>
            <person name="Muensterkoetter M."/>
            <person name="Nelson D."/>
            <person name="O'Donnell K."/>
            <person name="Ouellet T."/>
            <person name="Qi W."/>
            <person name="Quesneville H."/>
            <person name="Roncero M.I.G."/>
            <person name="Seong K.-Y."/>
            <person name="Tetko I.V."/>
            <person name="Urban M."/>
            <person name="Waalwijk C."/>
            <person name="Ward T.J."/>
            <person name="Yao J."/>
            <person name="Birren B.W."/>
            <person name="Kistler H.C."/>
        </authorList>
    </citation>
    <scope>NUCLEOTIDE SEQUENCE [LARGE SCALE GENOMIC DNA]</scope>
    <source>
        <strain>ATCC MYA-4620 / CBS 123657 / FGSC 9075 / NRRL 31084 / PH-1</strain>
    </source>
</reference>
<reference key="2">
    <citation type="journal article" date="2010" name="Nature">
        <title>Comparative genomics reveals mobile pathogenicity chromosomes in Fusarium.</title>
        <authorList>
            <person name="Ma L.-J."/>
            <person name="van der Does H.C."/>
            <person name="Borkovich K.A."/>
            <person name="Coleman J.J."/>
            <person name="Daboussi M.-J."/>
            <person name="Di Pietro A."/>
            <person name="Dufresne M."/>
            <person name="Freitag M."/>
            <person name="Grabherr M."/>
            <person name="Henrissat B."/>
            <person name="Houterman P.M."/>
            <person name="Kang S."/>
            <person name="Shim W.-B."/>
            <person name="Woloshuk C."/>
            <person name="Xie X."/>
            <person name="Xu J.-R."/>
            <person name="Antoniw J."/>
            <person name="Baker S.E."/>
            <person name="Bluhm B.H."/>
            <person name="Breakspear A."/>
            <person name="Brown D.W."/>
            <person name="Butchko R.A.E."/>
            <person name="Chapman S."/>
            <person name="Coulson R."/>
            <person name="Coutinho P.M."/>
            <person name="Danchin E.G.J."/>
            <person name="Diener A."/>
            <person name="Gale L.R."/>
            <person name="Gardiner D.M."/>
            <person name="Goff S."/>
            <person name="Hammond-Kosack K.E."/>
            <person name="Hilburn K."/>
            <person name="Hua-Van A."/>
            <person name="Jonkers W."/>
            <person name="Kazan K."/>
            <person name="Kodira C.D."/>
            <person name="Koehrsen M."/>
            <person name="Kumar L."/>
            <person name="Lee Y.-H."/>
            <person name="Li L."/>
            <person name="Manners J.M."/>
            <person name="Miranda-Saavedra D."/>
            <person name="Mukherjee M."/>
            <person name="Park G."/>
            <person name="Park J."/>
            <person name="Park S.-Y."/>
            <person name="Proctor R.H."/>
            <person name="Regev A."/>
            <person name="Ruiz-Roldan M.C."/>
            <person name="Sain D."/>
            <person name="Sakthikumar S."/>
            <person name="Sykes S."/>
            <person name="Schwartz D.C."/>
            <person name="Turgeon B.G."/>
            <person name="Wapinski I."/>
            <person name="Yoder O."/>
            <person name="Young S."/>
            <person name="Zeng Q."/>
            <person name="Zhou S."/>
            <person name="Galagan J."/>
            <person name="Cuomo C.A."/>
            <person name="Kistler H.C."/>
            <person name="Rep M."/>
        </authorList>
    </citation>
    <scope>GENOME REANNOTATION</scope>
    <source>
        <strain>ATCC MYA-4620 / CBS 123657 / FGSC 9075 / NRRL 31084 / PH-1</strain>
    </source>
</reference>
<reference key="3">
    <citation type="journal article" date="2015" name="BMC Genomics">
        <title>The completed genome sequence of the pathogenic ascomycete fungus Fusarium graminearum.</title>
        <authorList>
            <person name="King R."/>
            <person name="Urban M."/>
            <person name="Hammond-Kosack M.C.U."/>
            <person name="Hassani-Pak K."/>
            <person name="Hammond-Kosack K.E."/>
        </authorList>
    </citation>
    <scope>NUCLEOTIDE SEQUENCE [LARGE SCALE GENOMIC DNA]</scope>
    <source>
        <strain>ATCC MYA-4620 / CBS 123657 / FGSC 9075 / NRRL 31084 / PH-1</strain>
    </source>
</reference>
<reference key="4">
    <citation type="journal article" date="2012" name="Environ. Microbiol.">
        <title>Production of novel fusarielins by ectopic activation of the polyketide synthase 9 cluster in Fusarium graminearum.</title>
        <authorList>
            <person name="Soerensen J.L."/>
            <person name="Hansen F.T."/>
            <person name="Sondergaard T.E."/>
            <person name="Staerk D."/>
            <person name="Lee T.V."/>
            <person name="Wimmer R."/>
            <person name="Klitgaard L.G."/>
            <person name="Purup S."/>
            <person name="Giese H."/>
            <person name="Frandsen R.J."/>
        </authorList>
    </citation>
    <scope>INDUCTION</scope>
    <scope>FUNCTION</scope>
</reference>
<reference key="5">
    <citation type="journal article" date="2016" name="Molecules">
        <title>Functional Analysis of the Fusarielin Biosynthetic Gene Cluster.</title>
        <authorList>
            <person name="Droce A."/>
            <person name="Saei W."/>
            <person name="Joergensen S.H."/>
            <person name="Wimmer R."/>
            <person name="Giese H."/>
            <person name="Wollenberg R.D."/>
            <person name="Sondergaard T.E."/>
            <person name="Soerensen J.L."/>
        </authorList>
    </citation>
    <scope>FUNCTION</scope>
    <scope>DISRUPTION PHENOTYPE</scope>
    <scope>PATHWAY</scope>
</reference>
<dbReference type="EC" id="5.1.-.-" evidence="6"/>
<dbReference type="EMBL" id="HG970332">
    <property type="protein sequence ID" value="CEF75884.1"/>
    <property type="molecule type" value="Genomic_DNA"/>
</dbReference>
<dbReference type="SMR" id="A0A0E0RXA9"/>
<dbReference type="STRING" id="229533.A0A0E0RXA9"/>
<dbReference type="VEuPathDB" id="FungiDB:FGRAMPH1_01G08161"/>
<dbReference type="eggNOG" id="KOG1604">
    <property type="taxonomic scope" value="Eukaryota"/>
</dbReference>
<dbReference type="InParanoid" id="A0A0E0RXA9"/>
<dbReference type="Proteomes" id="UP000070720">
    <property type="component" value="Chromosome 1"/>
</dbReference>
<dbReference type="GO" id="GO:0004034">
    <property type="term" value="F:aldose 1-epimerase activity"/>
    <property type="evidence" value="ECO:0007669"/>
    <property type="project" value="TreeGrafter"/>
</dbReference>
<dbReference type="GO" id="GO:0030246">
    <property type="term" value="F:carbohydrate binding"/>
    <property type="evidence" value="ECO:0007669"/>
    <property type="project" value="InterPro"/>
</dbReference>
<dbReference type="GO" id="GO:0033499">
    <property type="term" value="P:galactose catabolic process via UDP-galactose, Leloir pathway"/>
    <property type="evidence" value="ECO:0007669"/>
    <property type="project" value="TreeGrafter"/>
</dbReference>
<dbReference type="GO" id="GO:0006006">
    <property type="term" value="P:glucose metabolic process"/>
    <property type="evidence" value="ECO:0007669"/>
    <property type="project" value="TreeGrafter"/>
</dbReference>
<dbReference type="Gene3D" id="2.70.98.10">
    <property type="match status" value="1"/>
</dbReference>
<dbReference type="InterPro" id="IPR008183">
    <property type="entry name" value="Aldose_1/G6P_1-epimerase"/>
</dbReference>
<dbReference type="InterPro" id="IPR011013">
    <property type="entry name" value="Gal_mutarotase_sf_dom"/>
</dbReference>
<dbReference type="InterPro" id="IPR014718">
    <property type="entry name" value="GH-type_carb-bd"/>
</dbReference>
<dbReference type="PANTHER" id="PTHR10091:SF6">
    <property type="entry name" value="1-EPIMERASE, PUTATIVE (AFU_ORTHOLOGUE AFUA_3G13240)-RELATED"/>
    <property type="match status" value="1"/>
</dbReference>
<dbReference type="PANTHER" id="PTHR10091">
    <property type="entry name" value="ALDOSE-1-EPIMERASE"/>
    <property type="match status" value="1"/>
</dbReference>
<dbReference type="Pfam" id="PF01263">
    <property type="entry name" value="Aldose_epim"/>
    <property type="match status" value="1"/>
</dbReference>
<dbReference type="SUPFAM" id="SSF74650">
    <property type="entry name" value="Galactose mutarotase-like"/>
    <property type="match status" value="1"/>
</dbReference>
<keyword id="KW-0413">Isomerase</keyword>
<keyword id="KW-1185">Reference proteome</keyword>
<gene>
    <name evidence="4" type="primary">FSL3</name>
    <name type="ORF">FG10462</name>
    <name type="ORF">FGRAMPH1_01T08161</name>
</gene>
<proteinExistence type="evidence at transcript level"/>
<sequence>MSVTRLSEPLQNILLQDLRNFYDRASRIATLSVSAIAAIKSAWTRGSPFAAATALYPTNEEGKYVIQAEGIRMEFTNYGGAVTNLWLNNSRGEEVDIVLGLDHARDYEDYPKNPYLNGAIGRYAGFMRGGRFDMDGESYQVATNAHNGSSTFNGGDRGWGRSILDIGSHTENSITFVLFDRSWNGFPGTAASCLTHTVTPYEWRVAFGVTPTKKPGPINMSQQAFFNLDGFKKKNLTGSVPVSDKTVRDHKLHLPLSGLRFETDALGLSTGDILGNPRGSEYDFWSASRRIGDVLEKPYMGICDRCQKRQYHNHNPSGAYDTIFQLGRSQPWNKEDVPAAILSSPESGISMKLYSDQEALHVHTWSQKEFPLKLKKGQGQGMVPQHGGISFEMQDWPDGLNHPEWRRESKTIWGMDGLYTAFSSYRFSVDKTEP</sequence>
<organism>
    <name type="scientific">Gibberella zeae (strain ATCC MYA-4620 / CBS 123657 / FGSC 9075 / NRRL 31084 / PH-1)</name>
    <name type="common">Wheat head blight fungus</name>
    <name type="synonym">Fusarium graminearum</name>
    <dbReference type="NCBI Taxonomy" id="229533"/>
    <lineage>
        <taxon>Eukaryota</taxon>
        <taxon>Fungi</taxon>
        <taxon>Dikarya</taxon>
        <taxon>Ascomycota</taxon>
        <taxon>Pezizomycotina</taxon>
        <taxon>Sordariomycetes</taxon>
        <taxon>Hypocreomycetidae</taxon>
        <taxon>Hypocreales</taxon>
        <taxon>Nectriaceae</taxon>
        <taxon>Fusarium</taxon>
    </lineage>
</organism>
<protein>
    <recommendedName>
        <fullName evidence="4">Epimerase FSL3</fullName>
        <ecNumber evidence="6">5.1.-.-</ecNumber>
    </recommendedName>
    <alternativeName>
        <fullName evidence="4">Fusarielin biosynthesis cluster protein 3</fullName>
    </alternativeName>
</protein>
<comment type="function">
    <text evidence="2 3">Epimerase; part of the gene cluster that mediates the biosynthesis of fusarielins F, G and H, decaketide compounds with 5 methylations and a decaline core that act as mycoestrogens as they stimulate growth of MCF-7 breast cancer cells (PubMed:22252016, PubMed:27983606). The initial compound in the pathway is produced by the reducing polyketide synthase FSL1. FSL1 lacks an active enoyl reductase (ER) domain and biosynthesis of fusarielins relies on the trans-acting enoyl reductase FSL5, before it is released through hydrolysis catalyzed by the thioesterase FSL2 (PubMed:22252016, PubMed:27983606). Fusarielins F, G, and H have a C11=C12 cis double bond and is fully reduced between C10 and C11 and between C12 and C13. FSL3 can be involved in the formation of the C11=C12 cis double bond by moving a hypothetical C10=C11 or C12=C13 trans double bond to form prefusarielin (PubMed:27983606). Prefusarielin is oxygenated at C15 and C16 by the cytochrome P450 monooxygenase FSL4, resulting in fusarielin F, which subsequently is epoxidized into fusarielin G by the same enzyme (PubMed:27983606). The final step in the pathway is a reduction of the carboxylic acid moiety to yield fusarielin H via a still undetermined mechanism (PubMed:27983606).</text>
</comment>
<comment type="pathway">
    <text evidence="3">Secondary metabolite biosynthesis.</text>
</comment>
<comment type="subunit">
    <text evidence="1">Monomer.</text>
</comment>
<comment type="induction">
    <text evidence="2">Expression is positively regulated by the fusarielin biosynthesis cluster-specific transcription factor FSL7, probably via its binding at the 5'-CGGNNNCCG-3' motif present in the promoter of all the cluster genes.</text>
</comment>
<comment type="disruption phenotype">
    <text evidence="3">Abolishes the production of fusarielins F, G and H.</text>
</comment>
<comment type="similarity">
    <text evidence="5">Belongs to the aldose epimerase family.</text>
</comment>
<feature type="chain" id="PRO_0000444961" description="Epimerase FSL3">
    <location>
        <begin position="1"/>
        <end position="434"/>
    </location>
</feature>
<feature type="active site" description="Proton acceptor" evidence="1">
    <location>
        <position position="392"/>
    </location>
</feature>
<feature type="binding site" evidence="1">
    <location>
        <begin position="125"/>
        <end position="126"/>
    </location>
    <ligand>
        <name>substrate</name>
    </ligand>
</feature>
<evidence type="ECO:0000250" key="1">
    <source>
        <dbReference type="UniProtKB" id="Q96C23"/>
    </source>
</evidence>
<evidence type="ECO:0000269" key="2">
    <source>
    </source>
</evidence>
<evidence type="ECO:0000269" key="3">
    <source>
    </source>
</evidence>
<evidence type="ECO:0000303" key="4">
    <source>
    </source>
</evidence>
<evidence type="ECO:0000305" key="5"/>
<evidence type="ECO:0000305" key="6">
    <source>
    </source>
</evidence>